<comment type="function">
    <text evidence="3">Catalyzes the phosphorylation of pantothenate (Pan), the first step in CoA biosynthesis.</text>
</comment>
<comment type="catalytic activity">
    <reaction>
        <text>(R)-pantothenate + ATP = (R)-4'-phosphopantothenate + ADP + H(+)</text>
        <dbReference type="Rhea" id="RHEA:16373"/>
        <dbReference type="ChEBI" id="CHEBI:10986"/>
        <dbReference type="ChEBI" id="CHEBI:15378"/>
        <dbReference type="ChEBI" id="CHEBI:29032"/>
        <dbReference type="ChEBI" id="CHEBI:30616"/>
        <dbReference type="ChEBI" id="CHEBI:456216"/>
        <dbReference type="EC" id="2.7.1.33"/>
    </reaction>
</comment>
<comment type="cofactor">
    <cofactor evidence="1">
        <name>NH4(+)</name>
        <dbReference type="ChEBI" id="CHEBI:28938"/>
    </cofactor>
    <cofactor evidence="1">
        <name>K(+)</name>
        <dbReference type="ChEBI" id="CHEBI:29103"/>
    </cofactor>
    <text evidence="1">A monovalent cation. Ammonium or potassium.</text>
</comment>
<comment type="biophysicochemical properties">
    <kinetics>
        <KM evidence="3">40 uM for pantothenate (at 50 degrees Celsius)</KM>
        <KM evidence="3">6 mM for ATP (at 50 degrees Celsius)</KM>
    </kinetics>
</comment>
<comment type="pathway">
    <text>Cofactor biosynthesis; coenzyme A biosynthesis; CoA from (R)-pantothenate: step 1/5.</text>
</comment>
<comment type="subunit">
    <text evidence="3">Homodimer.</text>
</comment>
<comment type="subcellular location">
    <subcellularLocation>
        <location evidence="1">Cytoplasm</location>
    </subcellularLocation>
</comment>
<comment type="similarity">
    <text evidence="4">Belongs to the type III pantothenate kinase family.</text>
</comment>
<sequence length="246" mass="27154">MYLLVDVGNTHSVFSITEDGKTFRRWRLSTGVFQTEDELFSHLHPLLGDAMREIKGIGVASVVPTQNTVIERFSQKYFHISPIWVKAKNGCVKWNVKNPSEVGADRVANVVAFVKEYGKNGIIIDMGTATTVDLVVNGSYEGGAILPGFFMMVHSLFRGTAKLPLVEVKPADFVVGKDTEENIRLGVVNGSVYALEGIIGRIKEVYGDLPVVLTGGQSKIVKDMIKHEIFDEDLTIKGVYHFCFGD</sequence>
<evidence type="ECO:0000250" key="1"/>
<evidence type="ECO:0000255" key="2"/>
<evidence type="ECO:0000269" key="3">
    <source>
    </source>
</evidence>
<evidence type="ECO:0000305" key="4"/>
<evidence type="ECO:0007829" key="5">
    <source>
        <dbReference type="PDB" id="3BEX"/>
    </source>
</evidence>
<keyword id="KW-0002">3D-structure</keyword>
<keyword id="KW-0067">ATP-binding</keyword>
<keyword id="KW-0173">Coenzyme A biosynthesis</keyword>
<keyword id="KW-0963">Cytoplasm</keyword>
<keyword id="KW-0418">Kinase</keyword>
<keyword id="KW-0479">Metal-binding</keyword>
<keyword id="KW-0547">Nucleotide-binding</keyword>
<keyword id="KW-0630">Potassium</keyword>
<keyword id="KW-1185">Reference proteome</keyword>
<keyword id="KW-0808">Transferase</keyword>
<name>COAX_THEMA</name>
<proteinExistence type="evidence at protein level"/>
<accession>Q9WZY5</accession>
<reference key="1">
    <citation type="journal article" date="1999" name="Nature">
        <title>Evidence for lateral gene transfer between Archaea and Bacteria from genome sequence of Thermotoga maritima.</title>
        <authorList>
            <person name="Nelson K.E."/>
            <person name="Clayton R.A."/>
            <person name="Gill S.R."/>
            <person name="Gwinn M.L."/>
            <person name="Dodson R.J."/>
            <person name="Haft D.H."/>
            <person name="Hickey E.K."/>
            <person name="Peterson J.D."/>
            <person name="Nelson W.C."/>
            <person name="Ketchum K.A."/>
            <person name="McDonald L.A."/>
            <person name="Utterback T.R."/>
            <person name="Malek J.A."/>
            <person name="Linher K.D."/>
            <person name="Garrett M.M."/>
            <person name="Stewart A.M."/>
            <person name="Cotton M.D."/>
            <person name="Pratt M.S."/>
            <person name="Phillips C.A."/>
            <person name="Richardson D.L."/>
            <person name="Heidelberg J.F."/>
            <person name="Sutton G.G."/>
            <person name="Fleischmann R.D."/>
            <person name="Eisen J.A."/>
            <person name="White O."/>
            <person name="Salzberg S.L."/>
            <person name="Smith H.O."/>
            <person name="Venter J.C."/>
            <person name="Fraser C.M."/>
        </authorList>
    </citation>
    <scope>NUCLEOTIDE SEQUENCE [LARGE SCALE GENOMIC DNA]</scope>
    <source>
        <strain>ATCC 43589 / DSM 3109 / JCM 10099 / NBRC 100826 / MSB8</strain>
    </source>
</reference>
<reference key="2">
    <citation type="journal article" date="2006" name="J. Bacteriol.">
        <title>Crystal structure of a type III pantothenate kinase: insight into the mechanism of an essential coenzyme A biosynthetic enzyme universally distributed in bacteria.</title>
        <authorList>
            <person name="Yang K."/>
            <person name="Eyobo Y."/>
            <person name="Brand L.A."/>
            <person name="Martynowski D."/>
            <person name="Tomchick D."/>
            <person name="Strauss E."/>
            <person name="Zhang H."/>
        </authorList>
    </citation>
    <scope>X-RAY CRYSTALLOGRAPHY (2.0 ANGSTROMS)</scope>
    <scope>FUNCTION</scope>
    <scope>SUBUNIT</scope>
    <scope>KINETIC PARAMETERS</scope>
    <source>
        <strain>ATCC 43589 / DSM 3109 / JCM 10099 / NBRC 100826 / MSB8</strain>
    </source>
</reference>
<organism>
    <name type="scientific">Thermotoga maritima (strain ATCC 43589 / DSM 3109 / JCM 10099 / NBRC 100826 / MSB8)</name>
    <dbReference type="NCBI Taxonomy" id="243274"/>
    <lineage>
        <taxon>Bacteria</taxon>
        <taxon>Thermotogati</taxon>
        <taxon>Thermotogota</taxon>
        <taxon>Thermotogae</taxon>
        <taxon>Thermotogales</taxon>
        <taxon>Thermotogaceae</taxon>
        <taxon>Thermotoga</taxon>
    </lineage>
</organism>
<dbReference type="EC" id="2.7.1.33"/>
<dbReference type="EMBL" id="AE000512">
    <property type="protein sequence ID" value="AAD35964.1"/>
    <property type="molecule type" value="Genomic_DNA"/>
</dbReference>
<dbReference type="PIR" id="D72320">
    <property type="entry name" value="D72320"/>
</dbReference>
<dbReference type="RefSeq" id="NP_228691.1">
    <property type="nucleotide sequence ID" value="NC_000853.1"/>
</dbReference>
<dbReference type="RefSeq" id="WP_004080709.1">
    <property type="nucleotide sequence ID" value="NZ_CP011107.1"/>
</dbReference>
<dbReference type="PDB" id="2GTD">
    <property type="method" value="X-ray"/>
    <property type="resolution" value="2.00 A"/>
    <property type="chains" value="A/B/C/D/E/F=1-245"/>
</dbReference>
<dbReference type="PDB" id="3BEX">
    <property type="method" value="X-ray"/>
    <property type="resolution" value="1.51 A"/>
    <property type="chains" value="A/B/C/D/E/F=1-246"/>
</dbReference>
<dbReference type="PDB" id="3BF1">
    <property type="method" value="X-ray"/>
    <property type="resolution" value="2.30 A"/>
    <property type="chains" value="A/B/C/D/E/F=1-246"/>
</dbReference>
<dbReference type="PDB" id="3BF3">
    <property type="method" value="X-ray"/>
    <property type="resolution" value="1.63 A"/>
    <property type="chains" value="A/B/C/D/E/F=1-246"/>
</dbReference>
<dbReference type="PDBsum" id="2GTD"/>
<dbReference type="PDBsum" id="3BEX"/>
<dbReference type="PDBsum" id="3BF1"/>
<dbReference type="PDBsum" id="3BF3"/>
<dbReference type="SMR" id="Q9WZY5"/>
<dbReference type="FunCoup" id="Q9WZY5">
    <property type="interactions" value="320"/>
</dbReference>
<dbReference type="STRING" id="243274.TM_0883"/>
<dbReference type="PaxDb" id="243274-THEMA_00220"/>
<dbReference type="EnsemblBacteria" id="AAD35964">
    <property type="protein sequence ID" value="AAD35964"/>
    <property type="gene ID" value="TM_0883"/>
</dbReference>
<dbReference type="KEGG" id="tma:TM0883"/>
<dbReference type="KEGG" id="tmi:THEMA_00220"/>
<dbReference type="KEGG" id="tmm:Tmari_0885"/>
<dbReference type="KEGG" id="tmw:THMA_0905"/>
<dbReference type="eggNOG" id="COG1521">
    <property type="taxonomic scope" value="Bacteria"/>
</dbReference>
<dbReference type="InParanoid" id="Q9WZY5"/>
<dbReference type="OrthoDB" id="9804707at2"/>
<dbReference type="BRENDA" id="2.7.1.33">
    <property type="organism ID" value="6331"/>
</dbReference>
<dbReference type="SABIO-RK" id="Q9WZY5"/>
<dbReference type="UniPathway" id="UPA00241">
    <property type="reaction ID" value="UER00352"/>
</dbReference>
<dbReference type="EvolutionaryTrace" id="Q9WZY5"/>
<dbReference type="Proteomes" id="UP000008183">
    <property type="component" value="Chromosome"/>
</dbReference>
<dbReference type="GO" id="GO:0005737">
    <property type="term" value="C:cytoplasm"/>
    <property type="evidence" value="ECO:0007669"/>
    <property type="project" value="UniProtKB-SubCell"/>
</dbReference>
<dbReference type="GO" id="GO:0005524">
    <property type="term" value="F:ATP binding"/>
    <property type="evidence" value="ECO:0007669"/>
    <property type="project" value="UniProtKB-UniRule"/>
</dbReference>
<dbReference type="GO" id="GO:0046872">
    <property type="term" value="F:metal ion binding"/>
    <property type="evidence" value="ECO:0007669"/>
    <property type="project" value="UniProtKB-KW"/>
</dbReference>
<dbReference type="GO" id="GO:0004594">
    <property type="term" value="F:pantothenate kinase activity"/>
    <property type="evidence" value="ECO:0007669"/>
    <property type="project" value="UniProtKB-UniRule"/>
</dbReference>
<dbReference type="GO" id="GO:0015937">
    <property type="term" value="P:coenzyme A biosynthetic process"/>
    <property type="evidence" value="ECO:0007669"/>
    <property type="project" value="UniProtKB-UniRule"/>
</dbReference>
<dbReference type="CDD" id="cd24015">
    <property type="entry name" value="ASKHA_NBD_PanK-III"/>
    <property type="match status" value="1"/>
</dbReference>
<dbReference type="Gene3D" id="3.30.420.40">
    <property type="match status" value="2"/>
</dbReference>
<dbReference type="HAMAP" id="MF_01274">
    <property type="entry name" value="Pantothen_kinase_3"/>
    <property type="match status" value="1"/>
</dbReference>
<dbReference type="InterPro" id="IPR043129">
    <property type="entry name" value="ATPase_NBD"/>
</dbReference>
<dbReference type="InterPro" id="IPR004619">
    <property type="entry name" value="Type_III_PanK"/>
</dbReference>
<dbReference type="NCBIfam" id="TIGR00671">
    <property type="entry name" value="baf"/>
    <property type="match status" value="1"/>
</dbReference>
<dbReference type="NCBIfam" id="NF009848">
    <property type="entry name" value="PRK13318.1-6"/>
    <property type="match status" value="1"/>
</dbReference>
<dbReference type="PANTHER" id="PTHR34265">
    <property type="entry name" value="TYPE III PANTOTHENATE KINASE"/>
    <property type="match status" value="1"/>
</dbReference>
<dbReference type="PANTHER" id="PTHR34265:SF1">
    <property type="entry name" value="TYPE III PANTOTHENATE KINASE"/>
    <property type="match status" value="1"/>
</dbReference>
<dbReference type="Pfam" id="PF03309">
    <property type="entry name" value="Pan_kinase"/>
    <property type="match status" value="1"/>
</dbReference>
<dbReference type="SUPFAM" id="SSF53067">
    <property type="entry name" value="Actin-like ATPase domain"/>
    <property type="match status" value="2"/>
</dbReference>
<feature type="chain" id="PRO_0000267598" description="Type III pantothenate kinase">
    <location>
        <begin position="1"/>
        <end position="246"/>
    </location>
</feature>
<feature type="active site" description="Proton acceptor" evidence="2">
    <location>
        <position position="105"/>
    </location>
</feature>
<feature type="binding site" evidence="1">
    <location>
        <begin position="6"/>
        <end position="13"/>
    </location>
    <ligand>
        <name>ATP</name>
        <dbReference type="ChEBI" id="CHEBI:30616"/>
    </ligand>
</feature>
<feature type="binding site" evidence="1">
    <location>
        <begin position="103"/>
        <end position="106"/>
    </location>
    <ligand>
        <name>substrate</name>
    </ligand>
</feature>
<feature type="binding site" evidence="2">
    <location>
        <position position="125"/>
    </location>
    <ligand>
        <name>K(+)</name>
        <dbReference type="ChEBI" id="CHEBI:29103"/>
    </ligand>
</feature>
<feature type="binding site" evidence="2">
    <location>
        <position position="128"/>
    </location>
    <ligand>
        <name>ATP</name>
        <dbReference type="ChEBI" id="CHEBI:30616"/>
    </ligand>
</feature>
<feature type="binding site" evidence="1">
    <location>
        <position position="179"/>
    </location>
    <ligand>
        <name>substrate</name>
    </ligand>
</feature>
<feature type="strand" evidence="5">
    <location>
        <begin position="1"/>
        <end position="7"/>
    </location>
</feature>
<feature type="strand" evidence="5">
    <location>
        <begin position="9"/>
        <end position="22"/>
    </location>
</feature>
<feature type="strand" evidence="5">
    <location>
        <begin position="24"/>
        <end position="29"/>
    </location>
</feature>
<feature type="helix" evidence="5">
    <location>
        <begin position="36"/>
        <end position="47"/>
    </location>
</feature>
<feature type="helix" evidence="5">
    <location>
        <begin position="48"/>
        <end position="53"/>
    </location>
</feature>
<feature type="strand" evidence="5">
    <location>
        <begin position="54"/>
        <end position="62"/>
    </location>
</feature>
<feature type="helix" evidence="5">
    <location>
        <begin position="64"/>
        <end position="78"/>
    </location>
</feature>
<feature type="strand" evidence="5">
    <location>
        <begin position="89"/>
        <end position="94"/>
    </location>
</feature>
<feature type="helix" evidence="5">
    <location>
        <begin position="99"/>
        <end position="101"/>
    </location>
</feature>
<feature type="helix" evidence="5">
    <location>
        <begin position="104"/>
        <end position="116"/>
    </location>
</feature>
<feature type="strand" evidence="5">
    <location>
        <begin position="121"/>
        <end position="136"/>
    </location>
</feature>
<feature type="strand" evidence="5">
    <location>
        <begin position="139"/>
        <end position="147"/>
    </location>
</feature>
<feature type="helix" evidence="5">
    <location>
        <begin position="149"/>
        <end position="158"/>
    </location>
</feature>
<feature type="strand" evidence="5">
    <location>
        <begin position="173"/>
        <end position="178"/>
    </location>
</feature>
<feature type="helix" evidence="5">
    <location>
        <begin position="179"/>
        <end position="206"/>
    </location>
</feature>
<feature type="strand" evidence="5">
    <location>
        <begin position="211"/>
        <end position="215"/>
    </location>
</feature>
<feature type="helix" evidence="5">
    <location>
        <begin position="219"/>
        <end position="224"/>
    </location>
</feature>
<feature type="strand" evidence="5">
    <location>
        <begin position="228"/>
        <end position="230"/>
    </location>
</feature>
<feature type="helix" evidence="5">
    <location>
        <begin position="234"/>
        <end position="244"/>
    </location>
</feature>
<gene>
    <name type="primary">coaX</name>
    <name type="ordered locus">TM_0883</name>
</gene>
<protein>
    <recommendedName>
        <fullName>Type III pantothenate kinase</fullName>
        <ecNumber>2.7.1.33</ecNumber>
    </recommendedName>
    <alternativeName>
        <fullName>PanK-III</fullName>
    </alternativeName>
    <alternativeName>
        <fullName>Pantothenic acid kinase</fullName>
    </alternativeName>
</protein>